<keyword id="KW-0963">Cytoplasm</keyword>
<keyword id="KW-0413">Isomerase</keyword>
<keyword id="KW-0414">Isoprene biosynthesis</keyword>
<keyword id="KW-0460">Magnesium</keyword>
<keyword id="KW-0464">Manganese</keyword>
<keyword id="KW-0479">Metal-binding</keyword>
<name>IDI_SALA4</name>
<comment type="function">
    <text evidence="1">Catalyzes the 1,3-allylic rearrangement of the homoallylic substrate isopentenyl (IPP) to its highly electrophilic allylic isomer, dimethylallyl diphosphate (DMAPP).</text>
</comment>
<comment type="catalytic activity">
    <reaction evidence="1">
        <text>isopentenyl diphosphate = dimethylallyl diphosphate</text>
        <dbReference type="Rhea" id="RHEA:23284"/>
        <dbReference type="ChEBI" id="CHEBI:57623"/>
        <dbReference type="ChEBI" id="CHEBI:128769"/>
        <dbReference type="EC" id="5.3.3.2"/>
    </reaction>
</comment>
<comment type="cofactor">
    <cofactor evidence="1">
        <name>Mg(2+)</name>
        <dbReference type="ChEBI" id="CHEBI:18420"/>
    </cofactor>
    <text evidence="1">Binds 1 Mg(2+) ion per subunit. The magnesium ion binds only when substrate is bound.</text>
</comment>
<comment type="cofactor">
    <cofactor evidence="1">
        <name>Mn(2+)</name>
        <dbReference type="ChEBI" id="CHEBI:29035"/>
    </cofactor>
    <text evidence="1">Binds 1 Mn(2+) ion per subunit.</text>
</comment>
<comment type="pathway">
    <text evidence="1">Isoprenoid biosynthesis; dimethylallyl diphosphate biosynthesis; dimethylallyl diphosphate from isopentenyl diphosphate: step 1/1.</text>
</comment>
<comment type="subunit">
    <text evidence="1">Homodimer.</text>
</comment>
<comment type="subcellular location">
    <subcellularLocation>
        <location evidence="1">Cytoplasm</location>
    </subcellularLocation>
</comment>
<comment type="similarity">
    <text evidence="1">Belongs to the IPP isomerase type 1 family.</text>
</comment>
<accession>B5F5G3</accession>
<feature type="chain" id="PRO_1000099440" description="Isopentenyl-diphosphate Delta-isomerase">
    <location>
        <begin position="1"/>
        <end position="181"/>
    </location>
</feature>
<feature type="domain" description="Nudix hydrolase">
    <location>
        <begin position="30"/>
        <end position="164"/>
    </location>
</feature>
<feature type="active site" evidence="1">
    <location>
        <position position="67"/>
    </location>
</feature>
<feature type="active site" evidence="1">
    <location>
        <position position="116"/>
    </location>
</feature>
<feature type="binding site" evidence="1">
    <location>
        <position position="25"/>
    </location>
    <ligand>
        <name>Mn(2+)</name>
        <dbReference type="ChEBI" id="CHEBI:29035"/>
    </ligand>
</feature>
<feature type="binding site" evidence="1">
    <location>
        <position position="32"/>
    </location>
    <ligand>
        <name>Mn(2+)</name>
        <dbReference type="ChEBI" id="CHEBI:29035"/>
    </ligand>
</feature>
<feature type="binding site" evidence="1">
    <location>
        <position position="69"/>
    </location>
    <ligand>
        <name>Mn(2+)</name>
        <dbReference type="ChEBI" id="CHEBI:29035"/>
    </ligand>
</feature>
<feature type="binding site" evidence="1">
    <location>
        <position position="87"/>
    </location>
    <ligand>
        <name>Mg(2+)</name>
        <dbReference type="ChEBI" id="CHEBI:18420"/>
    </ligand>
</feature>
<feature type="binding site" evidence="1">
    <location>
        <position position="114"/>
    </location>
    <ligand>
        <name>Mn(2+)</name>
        <dbReference type="ChEBI" id="CHEBI:29035"/>
    </ligand>
</feature>
<feature type="binding site" evidence="1">
    <location>
        <position position="116"/>
    </location>
    <ligand>
        <name>Mn(2+)</name>
        <dbReference type="ChEBI" id="CHEBI:29035"/>
    </ligand>
</feature>
<dbReference type="EC" id="5.3.3.2" evidence="1"/>
<dbReference type="EMBL" id="CP001138">
    <property type="protein sequence ID" value="ACH52150.1"/>
    <property type="molecule type" value="Genomic_DNA"/>
</dbReference>
<dbReference type="RefSeq" id="WP_000133992.1">
    <property type="nucleotide sequence ID" value="NC_011149.1"/>
</dbReference>
<dbReference type="SMR" id="B5F5G3"/>
<dbReference type="KEGG" id="sea:SeAg_B3195"/>
<dbReference type="HOGENOM" id="CLU_060552_2_0_6"/>
<dbReference type="UniPathway" id="UPA00059">
    <property type="reaction ID" value="UER00104"/>
</dbReference>
<dbReference type="Proteomes" id="UP000008819">
    <property type="component" value="Chromosome"/>
</dbReference>
<dbReference type="GO" id="GO:0005737">
    <property type="term" value="C:cytoplasm"/>
    <property type="evidence" value="ECO:0007669"/>
    <property type="project" value="UniProtKB-SubCell"/>
</dbReference>
<dbReference type="GO" id="GO:0004452">
    <property type="term" value="F:isopentenyl-diphosphate delta-isomerase activity"/>
    <property type="evidence" value="ECO:0007669"/>
    <property type="project" value="UniProtKB-UniRule"/>
</dbReference>
<dbReference type="GO" id="GO:0046872">
    <property type="term" value="F:metal ion binding"/>
    <property type="evidence" value="ECO:0007669"/>
    <property type="project" value="UniProtKB-KW"/>
</dbReference>
<dbReference type="GO" id="GO:0050992">
    <property type="term" value="P:dimethylallyl diphosphate biosynthetic process"/>
    <property type="evidence" value="ECO:0007669"/>
    <property type="project" value="UniProtKB-UniRule"/>
</dbReference>
<dbReference type="GO" id="GO:0008299">
    <property type="term" value="P:isoprenoid biosynthetic process"/>
    <property type="evidence" value="ECO:0007669"/>
    <property type="project" value="UniProtKB-KW"/>
</dbReference>
<dbReference type="CDD" id="cd02885">
    <property type="entry name" value="NUDIX_IPP_Isomerase"/>
    <property type="match status" value="1"/>
</dbReference>
<dbReference type="FunFam" id="3.90.79.10:FF:000009">
    <property type="entry name" value="Isopentenyl-diphosphate Delta-isomerase"/>
    <property type="match status" value="1"/>
</dbReference>
<dbReference type="Gene3D" id="3.90.79.10">
    <property type="entry name" value="Nucleoside Triphosphate Pyrophosphohydrolase"/>
    <property type="match status" value="1"/>
</dbReference>
<dbReference type="HAMAP" id="MF_00202">
    <property type="entry name" value="Idi"/>
    <property type="match status" value="1"/>
</dbReference>
<dbReference type="InterPro" id="IPR056375">
    <property type="entry name" value="Idi_bact"/>
</dbReference>
<dbReference type="InterPro" id="IPR011876">
    <property type="entry name" value="IsopentenylPP_isomerase_typ1"/>
</dbReference>
<dbReference type="InterPro" id="IPR015797">
    <property type="entry name" value="NUDIX_hydrolase-like_dom_sf"/>
</dbReference>
<dbReference type="InterPro" id="IPR000086">
    <property type="entry name" value="NUDIX_hydrolase_dom"/>
</dbReference>
<dbReference type="NCBIfam" id="TIGR02150">
    <property type="entry name" value="IPP_isom_1"/>
    <property type="match status" value="1"/>
</dbReference>
<dbReference type="NCBIfam" id="NF002995">
    <property type="entry name" value="PRK03759.1"/>
    <property type="match status" value="1"/>
</dbReference>
<dbReference type="PANTHER" id="PTHR10885">
    <property type="entry name" value="ISOPENTENYL-DIPHOSPHATE DELTA-ISOMERASE"/>
    <property type="match status" value="1"/>
</dbReference>
<dbReference type="PANTHER" id="PTHR10885:SF0">
    <property type="entry name" value="ISOPENTENYL-DIPHOSPHATE DELTA-ISOMERASE"/>
    <property type="match status" value="1"/>
</dbReference>
<dbReference type="Pfam" id="PF00293">
    <property type="entry name" value="NUDIX"/>
    <property type="match status" value="1"/>
</dbReference>
<dbReference type="PIRSF" id="PIRSF018427">
    <property type="entry name" value="Isopntndiph_ism"/>
    <property type="match status" value="1"/>
</dbReference>
<dbReference type="SUPFAM" id="SSF55811">
    <property type="entry name" value="Nudix"/>
    <property type="match status" value="1"/>
</dbReference>
<dbReference type="PROSITE" id="PS51462">
    <property type="entry name" value="NUDIX"/>
    <property type="match status" value="1"/>
</dbReference>
<sequence length="181" mass="20782">MTEEHVVLLDEQDKPSGTLEKYAAHTLNTPLHLAFSCWLFNEDGQLLVTRRSLSKKAWPGVWTNSVCGHPQQGETTEEAIIRRCRFELGVEITDLTPVYPHFSYRATDPNGIVENEVCPVFAARATSVLQVNSEEVMDYQWSEFKSVWKSLLATPWAFSPWMVMQASDEQARERLLDYCQR</sequence>
<organism>
    <name type="scientific">Salmonella agona (strain SL483)</name>
    <dbReference type="NCBI Taxonomy" id="454166"/>
    <lineage>
        <taxon>Bacteria</taxon>
        <taxon>Pseudomonadati</taxon>
        <taxon>Pseudomonadota</taxon>
        <taxon>Gammaproteobacteria</taxon>
        <taxon>Enterobacterales</taxon>
        <taxon>Enterobacteriaceae</taxon>
        <taxon>Salmonella</taxon>
    </lineage>
</organism>
<protein>
    <recommendedName>
        <fullName evidence="1">Isopentenyl-diphosphate Delta-isomerase</fullName>
        <shortName evidence="1">IPP isomerase</shortName>
        <ecNumber evidence="1">5.3.3.2</ecNumber>
    </recommendedName>
    <alternativeName>
        <fullName evidence="1">IPP:DMAPP isomerase</fullName>
    </alternativeName>
    <alternativeName>
        <fullName evidence="1">Isopentenyl pyrophosphate isomerase</fullName>
    </alternativeName>
</protein>
<evidence type="ECO:0000255" key="1">
    <source>
        <dbReference type="HAMAP-Rule" id="MF_00202"/>
    </source>
</evidence>
<reference key="1">
    <citation type="journal article" date="2011" name="J. Bacteriol.">
        <title>Comparative genomics of 28 Salmonella enterica isolates: evidence for CRISPR-mediated adaptive sublineage evolution.</title>
        <authorList>
            <person name="Fricke W.F."/>
            <person name="Mammel M.K."/>
            <person name="McDermott P.F."/>
            <person name="Tartera C."/>
            <person name="White D.G."/>
            <person name="Leclerc J.E."/>
            <person name="Ravel J."/>
            <person name="Cebula T.A."/>
        </authorList>
    </citation>
    <scope>NUCLEOTIDE SEQUENCE [LARGE SCALE GENOMIC DNA]</scope>
    <source>
        <strain>SL483</strain>
    </source>
</reference>
<gene>
    <name evidence="1" type="primary">idi</name>
    <name type="ordered locus">SeAg_B3195</name>
</gene>
<proteinExistence type="inferred from homology"/>